<evidence type="ECO:0000255" key="1">
    <source>
        <dbReference type="HAMAP-Rule" id="MF_00270"/>
    </source>
</evidence>
<evidence type="ECO:0000305" key="2"/>
<feature type="chain" id="PRO_0000345607" description="Small ribosomal subunit protein bS18c">
    <location>
        <begin position="1"/>
        <end position="73"/>
    </location>
</feature>
<protein>
    <recommendedName>
        <fullName evidence="1">Small ribosomal subunit protein bS18c</fullName>
    </recommendedName>
    <alternativeName>
        <fullName evidence="2">30S ribosomal protein S18, chloroplastic</fullName>
    </alternativeName>
</protein>
<reference key="1">
    <citation type="journal article" date="2007" name="Mol. Biol. Evol.">
        <title>Plastid genome sequence of the cryptophyte alga Rhodomonas salina CCMP1319: lateral transfer of putative DNA replication machinery and a test of chromist plastid phylogeny.</title>
        <authorList>
            <person name="Khan H."/>
            <person name="Parks N."/>
            <person name="Kozera C."/>
            <person name="Curtis B.A."/>
            <person name="Parsons B.J."/>
            <person name="Bowman S."/>
            <person name="Archibald J.M."/>
        </authorList>
    </citation>
    <scope>NUCLEOTIDE SEQUENCE [LARGE SCALE GENOMIC DNA]</scope>
    <source>
        <strain>CCMP1319 / NEPCC76 / CS-174</strain>
    </source>
</reference>
<comment type="subunit">
    <text evidence="1">Part of the 30S ribosomal subunit.</text>
</comment>
<comment type="subcellular location">
    <subcellularLocation>
        <location>Plastid</location>
        <location>Chloroplast</location>
    </subcellularLocation>
</comment>
<comment type="similarity">
    <text evidence="1">Belongs to the bacterial ribosomal protein bS18 family.</text>
</comment>
<geneLocation type="chloroplast"/>
<gene>
    <name evidence="1" type="primary">rps18</name>
</gene>
<proteinExistence type="inferred from homology"/>
<dbReference type="EMBL" id="EF508371">
    <property type="protein sequence ID" value="ABO70749.1"/>
    <property type="molecule type" value="Genomic_DNA"/>
</dbReference>
<dbReference type="RefSeq" id="YP_001293556.1">
    <property type="nucleotide sequence ID" value="NC_009573.1"/>
</dbReference>
<dbReference type="SMR" id="A6MVX7"/>
<dbReference type="GeneID" id="5228598"/>
<dbReference type="GO" id="GO:0009507">
    <property type="term" value="C:chloroplast"/>
    <property type="evidence" value="ECO:0007669"/>
    <property type="project" value="UniProtKB-SubCell"/>
</dbReference>
<dbReference type="GO" id="GO:0005763">
    <property type="term" value="C:mitochondrial small ribosomal subunit"/>
    <property type="evidence" value="ECO:0007669"/>
    <property type="project" value="TreeGrafter"/>
</dbReference>
<dbReference type="GO" id="GO:0070181">
    <property type="term" value="F:small ribosomal subunit rRNA binding"/>
    <property type="evidence" value="ECO:0007669"/>
    <property type="project" value="TreeGrafter"/>
</dbReference>
<dbReference type="GO" id="GO:0003735">
    <property type="term" value="F:structural constituent of ribosome"/>
    <property type="evidence" value="ECO:0007669"/>
    <property type="project" value="InterPro"/>
</dbReference>
<dbReference type="GO" id="GO:0006412">
    <property type="term" value="P:translation"/>
    <property type="evidence" value="ECO:0007669"/>
    <property type="project" value="UniProtKB-UniRule"/>
</dbReference>
<dbReference type="Gene3D" id="4.10.640.10">
    <property type="entry name" value="Ribosomal protein S18"/>
    <property type="match status" value="1"/>
</dbReference>
<dbReference type="HAMAP" id="MF_00270">
    <property type="entry name" value="Ribosomal_bS18"/>
    <property type="match status" value="1"/>
</dbReference>
<dbReference type="InterPro" id="IPR001648">
    <property type="entry name" value="Ribosomal_bS18"/>
</dbReference>
<dbReference type="InterPro" id="IPR018275">
    <property type="entry name" value="Ribosomal_bS18_CS"/>
</dbReference>
<dbReference type="InterPro" id="IPR036870">
    <property type="entry name" value="Ribosomal_bS18_sf"/>
</dbReference>
<dbReference type="NCBIfam" id="TIGR00165">
    <property type="entry name" value="S18"/>
    <property type="match status" value="1"/>
</dbReference>
<dbReference type="PANTHER" id="PTHR13479">
    <property type="entry name" value="30S RIBOSOMAL PROTEIN S18"/>
    <property type="match status" value="1"/>
</dbReference>
<dbReference type="PANTHER" id="PTHR13479:SF40">
    <property type="entry name" value="SMALL RIBOSOMAL SUBUNIT PROTEIN BS18M"/>
    <property type="match status" value="1"/>
</dbReference>
<dbReference type="Pfam" id="PF01084">
    <property type="entry name" value="Ribosomal_S18"/>
    <property type="match status" value="1"/>
</dbReference>
<dbReference type="PRINTS" id="PR00974">
    <property type="entry name" value="RIBOSOMALS18"/>
</dbReference>
<dbReference type="SUPFAM" id="SSF46911">
    <property type="entry name" value="Ribosomal protein S18"/>
    <property type="match status" value="1"/>
</dbReference>
<dbReference type="PROSITE" id="PS00057">
    <property type="entry name" value="RIBOSOMAL_S18"/>
    <property type="match status" value="1"/>
</dbReference>
<organism>
    <name type="scientific">Rhodomonas salina</name>
    <name type="common">Cryptomonas salina</name>
    <dbReference type="NCBI Taxonomy" id="52970"/>
    <lineage>
        <taxon>Eukaryota</taxon>
        <taxon>Cryptophyceae</taxon>
        <taxon>Pyrenomonadales</taxon>
        <taxon>Pyrenomonadaceae</taxon>
        <taxon>Rhodomonas</taxon>
    </lineage>
</organism>
<sequence>MAIYRRKASPIKIGDAIDYKDVELLSNFLTEQGKILPKRLTGLTNKQQNKVTKAIKRARMLSLLPFVNREGSL</sequence>
<keyword id="KW-0150">Chloroplast</keyword>
<keyword id="KW-0934">Plastid</keyword>
<keyword id="KW-0687">Ribonucleoprotein</keyword>
<keyword id="KW-0689">Ribosomal protein</keyword>
<keyword id="KW-0694">RNA-binding</keyword>
<keyword id="KW-0699">rRNA-binding</keyword>
<name>RR18_RHDSA</name>
<accession>A6MVX7</accession>